<sequence>KVYSRXELAKVLQDFGREAY</sequence>
<dbReference type="Proteomes" id="UP000286640">
    <property type="component" value="Unplaced"/>
</dbReference>
<proteinExistence type="evidence at protein level"/>
<evidence type="ECO:0000250" key="1">
    <source>
        <dbReference type="UniProtKB" id="Q8IXA5"/>
    </source>
</evidence>
<evidence type="ECO:0000255" key="2"/>
<evidence type="ECO:0000269" key="3">
    <source>
    </source>
</evidence>
<evidence type="ECO:0000269" key="4">
    <source ref="1"/>
</evidence>
<evidence type="ECO:0000303" key="5">
    <source ref="1"/>
</evidence>
<evidence type="ECO:0000305" key="6"/>
<accession>P83198</accession>
<name>SACA3_VULVU</name>
<feature type="chain" id="PRO_0000312770" description="Sperm acrosome membrane-associated protein 3, processed form">
    <location>
        <begin position="1"/>
        <end position="20" status="greater than"/>
    </location>
</feature>
<feature type="non-terminal residue" evidence="5">
    <location>
        <position position="20"/>
    </location>
</feature>
<protein>
    <recommendedName>
        <fullName>Sperm acrosome membrane-associated protein 3, processed form</fullName>
    </recommendedName>
    <alternativeName>
        <fullName>Autoantigenic sperm protein 3</fullName>
    </alternativeName>
    <alternativeName>
        <fullName>Lysozyme-like protein 3</fullName>
    </alternativeName>
    <alternativeName>
        <fullName>Sperm lysozyme-like protein 1</fullName>
    </alternativeName>
    <alternativeName>
        <fullName>fSP3</fullName>
    </alternativeName>
</protein>
<gene>
    <name type="primary">SPACA3</name>
</gene>
<comment type="function">
    <text evidence="1">Sperm surface membrane protein that may be involved in sperm-egg plasma membrane adhesion and fusion during fertilization. It could be a potential receptor for the egg oligosaccharide residue N-acetylglucosamine, which is present in the extracellular matrix over the egg plasma membrane (By similarity).</text>
</comment>
<comment type="miscellaneous">
    <text evidence="3">On the 2D-gel the determined pI of this protein is: 5.3, its MW is: 16.8 kDa.</text>
</comment>
<comment type="similarity">
    <text evidence="2">Belongs to the glycosyl hydrolase 22 family.</text>
</comment>
<comment type="caution">
    <text evidence="1 6">May lack the conserved Glu and Asp residues essential for activity.</text>
</comment>
<keyword id="KW-0903">Direct protein sequencing</keyword>
<keyword id="KW-1185">Reference proteome</keyword>
<organism>
    <name type="scientific">Vulpes vulpes</name>
    <name type="common">Red fox</name>
    <dbReference type="NCBI Taxonomy" id="9627"/>
    <lineage>
        <taxon>Eukaryota</taxon>
        <taxon>Metazoa</taxon>
        <taxon>Chordata</taxon>
        <taxon>Craniata</taxon>
        <taxon>Vertebrata</taxon>
        <taxon>Euteleostomi</taxon>
        <taxon>Mammalia</taxon>
        <taxon>Eutheria</taxon>
        <taxon>Laurasiatheria</taxon>
        <taxon>Carnivora</taxon>
        <taxon>Caniformia</taxon>
        <taxon>Canidae</taxon>
        <taxon>Vulpes</taxon>
    </lineage>
</organism>
<reference evidence="6" key="1">
    <citation type="submission" date="2001-12" db="UniProtKB">
        <title>Partial characterisation of antigenic sperm proteins in foxes (Vulpes vulpes).</title>
        <authorList>
            <person name="Verdier Y."/>
            <person name="Rouet N."/>
            <person name="Artois M."/>
            <person name="Boue F."/>
        </authorList>
    </citation>
    <scope>PROTEIN SEQUENCE</scope>
    <source>
        <tissue evidence="4">Sperm</tissue>
    </source>
</reference>
<reference key="2">
    <citation type="journal article" date="2002" name="J. Androl.">
        <title>Partial characterization of antigenic sperm proteins in foxes (Vulpes vulpes).</title>
        <authorList>
            <person name="Verdier Y."/>
            <person name="Rouet N."/>
            <person name="Artois M."/>
            <person name="Boue F."/>
        </authorList>
    </citation>
    <scope>IDENTIFICATION BY 2D-PAGE</scope>
</reference>